<dbReference type="EC" id="3.1.11.6" evidence="1"/>
<dbReference type="EMBL" id="CP000075">
    <property type="protein sequence ID" value="AAY36310.1"/>
    <property type="molecule type" value="Genomic_DNA"/>
</dbReference>
<dbReference type="RefSeq" id="YP_234348.1">
    <property type="nucleotide sequence ID" value="NC_007005.1"/>
</dbReference>
<dbReference type="SMR" id="Q4ZX12"/>
<dbReference type="STRING" id="205918.Psyr_1259"/>
<dbReference type="KEGG" id="psb:Psyr_1259"/>
<dbReference type="PATRIC" id="fig|205918.7.peg.1291"/>
<dbReference type="eggNOG" id="COG1570">
    <property type="taxonomic scope" value="Bacteria"/>
</dbReference>
<dbReference type="HOGENOM" id="CLU_023625_3_1_6"/>
<dbReference type="OrthoDB" id="9802795at2"/>
<dbReference type="Proteomes" id="UP000000426">
    <property type="component" value="Chromosome"/>
</dbReference>
<dbReference type="GO" id="GO:0005737">
    <property type="term" value="C:cytoplasm"/>
    <property type="evidence" value="ECO:0007669"/>
    <property type="project" value="UniProtKB-SubCell"/>
</dbReference>
<dbReference type="GO" id="GO:0009318">
    <property type="term" value="C:exodeoxyribonuclease VII complex"/>
    <property type="evidence" value="ECO:0007669"/>
    <property type="project" value="InterPro"/>
</dbReference>
<dbReference type="GO" id="GO:0008855">
    <property type="term" value="F:exodeoxyribonuclease VII activity"/>
    <property type="evidence" value="ECO:0007669"/>
    <property type="project" value="UniProtKB-UniRule"/>
</dbReference>
<dbReference type="GO" id="GO:0003676">
    <property type="term" value="F:nucleic acid binding"/>
    <property type="evidence" value="ECO:0007669"/>
    <property type="project" value="InterPro"/>
</dbReference>
<dbReference type="GO" id="GO:0006308">
    <property type="term" value="P:DNA catabolic process"/>
    <property type="evidence" value="ECO:0007669"/>
    <property type="project" value="UniProtKB-UniRule"/>
</dbReference>
<dbReference type="CDD" id="cd04489">
    <property type="entry name" value="ExoVII_LU_OBF"/>
    <property type="match status" value="1"/>
</dbReference>
<dbReference type="Gene3D" id="2.40.50.1010">
    <property type="match status" value="1"/>
</dbReference>
<dbReference type="HAMAP" id="MF_00378">
    <property type="entry name" value="Exonuc_7_L"/>
    <property type="match status" value="1"/>
</dbReference>
<dbReference type="InterPro" id="IPR003753">
    <property type="entry name" value="Exonuc_VII_L"/>
</dbReference>
<dbReference type="InterPro" id="IPR020579">
    <property type="entry name" value="Exonuc_VII_lsu_C"/>
</dbReference>
<dbReference type="InterPro" id="IPR025824">
    <property type="entry name" value="OB-fold_nuc-bd_dom"/>
</dbReference>
<dbReference type="NCBIfam" id="TIGR00237">
    <property type="entry name" value="xseA"/>
    <property type="match status" value="1"/>
</dbReference>
<dbReference type="PANTHER" id="PTHR30008">
    <property type="entry name" value="EXODEOXYRIBONUCLEASE 7 LARGE SUBUNIT"/>
    <property type="match status" value="1"/>
</dbReference>
<dbReference type="PANTHER" id="PTHR30008:SF0">
    <property type="entry name" value="EXODEOXYRIBONUCLEASE 7 LARGE SUBUNIT"/>
    <property type="match status" value="1"/>
</dbReference>
<dbReference type="Pfam" id="PF02601">
    <property type="entry name" value="Exonuc_VII_L"/>
    <property type="match status" value="1"/>
</dbReference>
<dbReference type="Pfam" id="PF13742">
    <property type="entry name" value="tRNA_anti_2"/>
    <property type="match status" value="1"/>
</dbReference>
<feature type="chain" id="PRO_0000273679" description="Exodeoxyribonuclease 7 large subunit">
    <location>
        <begin position="1"/>
        <end position="463"/>
    </location>
</feature>
<gene>
    <name evidence="1" type="primary">xseA</name>
    <name type="ordered locus">Psyr_1259</name>
</gene>
<sequence>MMPDMIKDPFARLGLDREVLTVSQLNGRARVLLEDVFSSIWVEGEISNLSRPASGHVYFTLKDSGAQVRCALFRQSAARVRQALKDGLQVKVRGKVSLFEGRGDYQLILDTVEPAGDGALRLAFDALKAKLSDEGLFSAERKVALPLHPQRIGIISSPTGAVIRDIISVFRRRAPRVELTLIPTAVQGREAINQIVRALKLADSRGFDALILARGGGSLEDLWCFNEEAVARAIDACVTPIVSAVGHETDVSISDFVADVRAPTPSAAAELLAPDSSDLHRRVDNLHRRLVSRMQDRLMRERLRLEGISRRLRHPGERLRQQSQRLDDLDMRLRRALEQTMHQRQLRLAHMQSRLAAQHPGRTLAFLRQRLDALAERLPRAIREQIKARKLQLQSQVQTLNVVSPLATLGRGYSILLDERGHAIRNAAQTQTGQRLTARLGEGELHVRVEDNHLTPVTLSLLD</sequence>
<reference key="1">
    <citation type="journal article" date="2005" name="Proc. Natl. Acad. Sci. U.S.A.">
        <title>Comparison of the complete genome sequences of Pseudomonas syringae pv. syringae B728a and pv. tomato DC3000.</title>
        <authorList>
            <person name="Feil H."/>
            <person name="Feil W.S."/>
            <person name="Chain P."/>
            <person name="Larimer F."/>
            <person name="Dibartolo G."/>
            <person name="Copeland A."/>
            <person name="Lykidis A."/>
            <person name="Trong S."/>
            <person name="Nolan M."/>
            <person name="Goltsman E."/>
            <person name="Thiel J."/>
            <person name="Malfatti S."/>
            <person name="Loper J.E."/>
            <person name="Lapidus A."/>
            <person name="Detter J.C."/>
            <person name="Land M."/>
            <person name="Richardson P.M."/>
            <person name="Kyrpides N.C."/>
            <person name="Ivanova N."/>
            <person name="Lindow S.E."/>
        </authorList>
    </citation>
    <scope>NUCLEOTIDE SEQUENCE [LARGE SCALE GENOMIC DNA]</scope>
    <source>
        <strain>B728a</strain>
    </source>
</reference>
<organism>
    <name type="scientific">Pseudomonas syringae pv. syringae (strain B728a)</name>
    <dbReference type="NCBI Taxonomy" id="205918"/>
    <lineage>
        <taxon>Bacteria</taxon>
        <taxon>Pseudomonadati</taxon>
        <taxon>Pseudomonadota</taxon>
        <taxon>Gammaproteobacteria</taxon>
        <taxon>Pseudomonadales</taxon>
        <taxon>Pseudomonadaceae</taxon>
        <taxon>Pseudomonas</taxon>
        <taxon>Pseudomonas syringae</taxon>
    </lineage>
</organism>
<comment type="function">
    <text evidence="1">Bidirectionally degrades single-stranded DNA into large acid-insoluble oligonucleotides, which are then degraded further into small acid-soluble oligonucleotides.</text>
</comment>
<comment type="catalytic activity">
    <reaction evidence="1">
        <text>Exonucleolytic cleavage in either 5'- to 3'- or 3'- to 5'-direction to yield nucleoside 5'-phosphates.</text>
        <dbReference type="EC" id="3.1.11.6"/>
    </reaction>
</comment>
<comment type="subunit">
    <text evidence="1">Heterooligomer composed of large and small subunits.</text>
</comment>
<comment type="subcellular location">
    <subcellularLocation>
        <location evidence="1">Cytoplasm</location>
    </subcellularLocation>
</comment>
<comment type="similarity">
    <text evidence="1">Belongs to the XseA family.</text>
</comment>
<protein>
    <recommendedName>
        <fullName evidence="1">Exodeoxyribonuclease 7 large subunit</fullName>
        <ecNumber evidence="1">3.1.11.6</ecNumber>
    </recommendedName>
    <alternativeName>
        <fullName evidence="1">Exodeoxyribonuclease VII large subunit</fullName>
        <shortName evidence="1">Exonuclease VII large subunit</shortName>
    </alternativeName>
</protein>
<evidence type="ECO:0000255" key="1">
    <source>
        <dbReference type="HAMAP-Rule" id="MF_00378"/>
    </source>
</evidence>
<name>EX7L_PSEU2</name>
<accession>Q4ZX12</accession>
<keyword id="KW-0963">Cytoplasm</keyword>
<keyword id="KW-0269">Exonuclease</keyword>
<keyword id="KW-0378">Hydrolase</keyword>
<keyword id="KW-0540">Nuclease</keyword>
<proteinExistence type="inferred from homology"/>